<feature type="chain" id="PRO_0000064270" description="Alpha-catulin">
    <location>
        <begin position="1"/>
        <end position="734"/>
    </location>
</feature>
<feature type="modified residue" description="Phosphoserine" evidence="2">
    <location>
        <position position="374"/>
    </location>
</feature>
<feature type="modified residue" description="Phosphoserine" evidence="3">
    <location>
        <position position="538"/>
    </location>
</feature>
<comment type="function">
    <text evidence="1">May modulate the Rho pathway signaling by providing a scaffold for the Lbc Rho guanine nucleotide exchange factor (ARHGEF1).</text>
</comment>
<comment type="subunit">
    <text evidence="1">Interacts with ARHGEF1.</text>
</comment>
<comment type="subcellular location">
    <subcellularLocation>
        <location evidence="1">Cytoplasm</location>
        <location evidence="1">Cytoskeleton</location>
    </subcellularLocation>
    <subcellularLocation>
        <location evidence="1">Cytoplasm</location>
        <location evidence="1">Cell cortex</location>
    </subcellularLocation>
</comment>
<comment type="similarity">
    <text evidence="4">Belongs to the vinculin/alpha-catenin family.</text>
</comment>
<evidence type="ECO:0000250" key="1"/>
<evidence type="ECO:0000250" key="2">
    <source>
        <dbReference type="UniProtKB" id="O88327"/>
    </source>
</evidence>
<evidence type="ECO:0000250" key="3">
    <source>
        <dbReference type="UniProtKB" id="Q9UBT7"/>
    </source>
</evidence>
<evidence type="ECO:0000305" key="4"/>
<organism>
    <name type="scientific">Pongo abelii</name>
    <name type="common">Sumatran orangutan</name>
    <name type="synonym">Pongo pygmaeus abelii</name>
    <dbReference type="NCBI Taxonomy" id="9601"/>
    <lineage>
        <taxon>Eukaryota</taxon>
        <taxon>Metazoa</taxon>
        <taxon>Chordata</taxon>
        <taxon>Craniata</taxon>
        <taxon>Vertebrata</taxon>
        <taxon>Euteleostomi</taxon>
        <taxon>Mammalia</taxon>
        <taxon>Eutheria</taxon>
        <taxon>Euarchontoglires</taxon>
        <taxon>Primates</taxon>
        <taxon>Haplorrhini</taxon>
        <taxon>Catarrhini</taxon>
        <taxon>Hominidae</taxon>
        <taxon>Pongo</taxon>
    </lineage>
</organism>
<accession>Q5RC06</accession>
<sequence>MAASPGPAGVGGAGAVYGSGSSGFALDSGLEIKTRSVEQTLLPLVSQITTLINHKDNTKKSDKTLQAIQRVGQAVNLAVGRFVKVGEAIANENWDLKEEINIACIEAKQAGETIAALTDITNLNHLESDGQITIFTDKTGVIKAARLLLSSVTKVLLLADRVVIKQIITSRNKVLATMERLEKVNSFQEFVQIFSQFGNEMVEFAHLSGDRQNDLKDEKKKAKMAAARAVLEKCTMMLLTASKTCLRHPNCESAHKNKEGVFDRMKVALDKVIEIVTDCKPNGETDISSISIFTGIKEFKMNIEALRENLYFQSKENLSVTLEVILERMEDFTDSAYTSHEHRERILELSTQARMELQQLISVWIQAQSKKTKSIAEELELSILKISHSLNELKKELHSTATQLAADLLKYHADHVVLKALKLTGVEGNLEALAEYACKLSEQKEQLVETCRLLRHISGTEPLEITCIHAEETFQVTGQQIISAAETLTLHPSSKIAKENLDVFCEAWESQISDMSTLLREINDVFEGRRGEKYGYLSLPKPMKNNANLKSLKPDKPDSEEQAKIAKLGLKLGLLTSDADCEIEKWEDQENEIVQYGRNMSSMAYSLYLFTRGEGPLKTSQDLIHQLEVFAAEGLKLTSSVQAFSKQLKDDDKLMLLLEINKLIPLCHQLQTVTKTSLQNKVFLKVDKCITKTRSMMALLVQLLSLCYKLLKKLQMENNGWVSVTNKDTMDSKT</sequence>
<gene>
    <name type="primary">CTNNAL1</name>
</gene>
<name>CTNL1_PONAB</name>
<protein>
    <recommendedName>
        <fullName>Alpha-catulin</fullName>
    </recommendedName>
    <alternativeName>
        <fullName>Alpha-catenin-related protein</fullName>
        <shortName>ACRP</shortName>
    </alternativeName>
    <alternativeName>
        <fullName>Catenin alpha-like protein 1</fullName>
    </alternativeName>
</protein>
<proteinExistence type="evidence at transcript level"/>
<keyword id="KW-0963">Cytoplasm</keyword>
<keyword id="KW-0206">Cytoskeleton</keyword>
<keyword id="KW-0597">Phosphoprotein</keyword>
<keyword id="KW-1185">Reference proteome</keyword>
<reference key="1">
    <citation type="submission" date="2004-11" db="EMBL/GenBank/DDBJ databases">
        <authorList>
            <consortium name="The German cDNA consortium"/>
        </authorList>
    </citation>
    <scope>NUCLEOTIDE SEQUENCE [LARGE SCALE MRNA]</scope>
    <source>
        <tissue>Heart</tissue>
    </source>
</reference>
<dbReference type="EMBL" id="CR858476">
    <property type="protein sequence ID" value="CAH90704.1"/>
    <property type="molecule type" value="mRNA"/>
</dbReference>
<dbReference type="RefSeq" id="NP_001125389.1">
    <property type="nucleotide sequence ID" value="NM_001131917.1"/>
</dbReference>
<dbReference type="SMR" id="Q5RC06"/>
<dbReference type="FunCoup" id="Q5RC06">
    <property type="interactions" value="1034"/>
</dbReference>
<dbReference type="STRING" id="9601.ENSPPYP00000021824"/>
<dbReference type="GeneID" id="100172294"/>
<dbReference type="KEGG" id="pon:100172294"/>
<dbReference type="CTD" id="8727"/>
<dbReference type="eggNOG" id="KOG3681">
    <property type="taxonomic scope" value="Eukaryota"/>
</dbReference>
<dbReference type="InParanoid" id="Q5RC06"/>
<dbReference type="OrthoDB" id="9933814at2759"/>
<dbReference type="Proteomes" id="UP000001595">
    <property type="component" value="Unplaced"/>
</dbReference>
<dbReference type="GO" id="GO:0005938">
    <property type="term" value="C:cell cortex"/>
    <property type="evidence" value="ECO:0007669"/>
    <property type="project" value="UniProtKB-SubCell"/>
</dbReference>
<dbReference type="GO" id="GO:0005856">
    <property type="term" value="C:cytoskeleton"/>
    <property type="evidence" value="ECO:0007669"/>
    <property type="project" value="UniProtKB-SubCell"/>
</dbReference>
<dbReference type="GO" id="GO:0051015">
    <property type="term" value="F:actin filament binding"/>
    <property type="evidence" value="ECO:0007669"/>
    <property type="project" value="InterPro"/>
</dbReference>
<dbReference type="GO" id="GO:0045296">
    <property type="term" value="F:cadherin binding"/>
    <property type="evidence" value="ECO:0007669"/>
    <property type="project" value="InterPro"/>
</dbReference>
<dbReference type="GO" id="GO:0007155">
    <property type="term" value="P:cell adhesion"/>
    <property type="evidence" value="ECO:0007669"/>
    <property type="project" value="InterPro"/>
</dbReference>
<dbReference type="GO" id="GO:0007266">
    <property type="term" value="P:Rho protein signal transduction"/>
    <property type="evidence" value="ECO:0007669"/>
    <property type="project" value="InterPro"/>
</dbReference>
<dbReference type="FunFam" id="1.20.120.230:FF:000014">
    <property type="entry name" value="Catenin alpha like 1"/>
    <property type="match status" value="1"/>
</dbReference>
<dbReference type="FunFam" id="1.20.120.230:FF:000016">
    <property type="entry name" value="Catenin alpha like 1"/>
    <property type="match status" value="1"/>
</dbReference>
<dbReference type="FunFam" id="1.20.120.230:FF:000017">
    <property type="entry name" value="Catenin alpha like 1"/>
    <property type="match status" value="1"/>
</dbReference>
<dbReference type="FunFam" id="1.20.120.230:FF:000022">
    <property type="entry name" value="Catenin alpha like 1"/>
    <property type="match status" value="1"/>
</dbReference>
<dbReference type="Gene3D" id="1.20.120.230">
    <property type="entry name" value="Alpha-catenin/vinculin-like"/>
    <property type="match status" value="4"/>
</dbReference>
<dbReference type="InterPro" id="IPR036723">
    <property type="entry name" value="Alpha-catenin/vinculin-like_sf"/>
</dbReference>
<dbReference type="InterPro" id="IPR001033">
    <property type="entry name" value="Alpha_catenin"/>
</dbReference>
<dbReference type="InterPro" id="IPR030045">
    <property type="entry name" value="CTNNAL1"/>
</dbReference>
<dbReference type="InterPro" id="IPR006077">
    <property type="entry name" value="Vinculin/catenin"/>
</dbReference>
<dbReference type="PANTHER" id="PTHR46342">
    <property type="entry name" value="ALPHA-CATULIN"/>
    <property type="match status" value="1"/>
</dbReference>
<dbReference type="PANTHER" id="PTHR46342:SF1">
    <property type="entry name" value="ALPHA-CATULIN"/>
    <property type="match status" value="1"/>
</dbReference>
<dbReference type="Pfam" id="PF01044">
    <property type="entry name" value="Vinculin"/>
    <property type="match status" value="2"/>
</dbReference>
<dbReference type="PRINTS" id="PR00805">
    <property type="entry name" value="ALPHACATENIN"/>
</dbReference>
<dbReference type="SUPFAM" id="SSF47220">
    <property type="entry name" value="alpha-catenin/vinculin-like"/>
    <property type="match status" value="3"/>
</dbReference>